<name>SECE_HALMT</name>
<protein>
    <recommendedName>
        <fullName evidence="1">Protein translocase subunit SecE</fullName>
    </recommendedName>
    <alternativeName>
        <fullName evidence="1">Protein transport protein Sec61 gamma subunit homolog</fullName>
    </alternativeName>
</protein>
<dbReference type="EMBL" id="AF196833">
    <property type="protein sequence ID" value="AAF05838.1"/>
    <property type="molecule type" value="Genomic_DNA"/>
</dbReference>
<dbReference type="EMBL" id="CP001868">
    <property type="protein sequence ID" value="AFK18400.1"/>
    <property type="molecule type" value="Genomic_DNA"/>
</dbReference>
<dbReference type="PIR" id="T44632">
    <property type="entry name" value="T44632"/>
</dbReference>
<dbReference type="RefSeq" id="WP_004044219.1">
    <property type="nucleotide sequence ID" value="NZ_JAWXXQ010000001.1"/>
</dbReference>
<dbReference type="SMR" id="Q9V2S5"/>
<dbReference type="STRING" id="523841.HFX_0677"/>
<dbReference type="PaxDb" id="523841-HFX_0677"/>
<dbReference type="KEGG" id="hme:HFX_0677"/>
<dbReference type="eggNOG" id="arCOG02204">
    <property type="taxonomic scope" value="Archaea"/>
</dbReference>
<dbReference type="HOGENOM" id="CLU_191921_2_0_2"/>
<dbReference type="OrthoDB" id="52835at2157"/>
<dbReference type="Proteomes" id="UP000006469">
    <property type="component" value="Chromosome"/>
</dbReference>
<dbReference type="GO" id="GO:0005886">
    <property type="term" value="C:plasma membrane"/>
    <property type="evidence" value="ECO:0007669"/>
    <property type="project" value="UniProtKB-SubCell"/>
</dbReference>
<dbReference type="GO" id="GO:0008320">
    <property type="term" value="F:protein transmembrane transporter activity"/>
    <property type="evidence" value="ECO:0007669"/>
    <property type="project" value="UniProtKB-UniRule"/>
</dbReference>
<dbReference type="GO" id="GO:0065002">
    <property type="term" value="P:intracellular protein transmembrane transport"/>
    <property type="evidence" value="ECO:0007669"/>
    <property type="project" value="UniProtKB-UniRule"/>
</dbReference>
<dbReference type="GO" id="GO:0009306">
    <property type="term" value="P:protein secretion"/>
    <property type="evidence" value="ECO:0007669"/>
    <property type="project" value="UniProtKB-UniRule"/>
</dbReference>
<dbReference type="GO" id="GO:0006605">
    <property type="term" value="P:protein targeting"/>
    <property type="evidence" value="ECO:0007669"/>
    <property type="project" value="UniProtKB-UniRule"/>
</dbReference>
<dbReference type="Gene3D" id="1.20.5.820">
    <property type="entry name" value="Preprotein translocase SecE subunit"/>
    <property type="match status" value="1"/>
</dbReference>
<dbReference type="HAMAP" id="MF_00422">
    <property type="entry name" value="SecE"/>
    <property type="match status" value="1"/>
</dbReference>
<dbReference type="InterPro" id="IPR023391">
    <property type="entry name" value="Prot_translocase_SecE_dom_sf"/>
</dbReference>
<dbReference type="InterPro" id="IPR008158">
    <property type="entry name" value="Translocase_Sec61-g"/>
</dbReference>
<dbReference type="InterPro" id="IPR001901">
    <property type="entry name" value="Translocase_SecE/Sec61-g"/>
</dbReference>
<dbReference type="NCBIfam" id="NF006910">
    <property type="entry name" value="PRK09400.1-6"/>
    <property type="match status" value="1"/>
</dbReference>
<dbReference type="NCBIfam" id="TIGR00327">
    <property type="entry name" value="secE_euk_arch"/>
    <property type="match status" value="1"/>
</dbReference>
<dbReference type="SUPFAM" id="SSF103456">
    <property type="entry name" value="Preprotein translocase SecE subunit"/>
    <property type="match status" value="1"/>
</dbReference>
<proteinExistence type="inferred from homology"/>
<feature type="chain" id="PRO_0000104216" description="Protein translocase subunit SecE">
    <location>
        <begin position="1"/>
        <end position="57"/>
    </location>
</feature>
<feature type="transmembrane region" description="Helical" evidence="1">
    <location>
        <begin position="33"/>
        <end position="53"/>
    </location>
</feature>
<gene>
    <name evidence="1" type="primary">secE</name>
    <name type="ordered locus">HFX_0677</name>
</gene>
<accession>Q9V2S5</accession>
<accession>I3R2E0</accession>
<sequence>MDVKYDLNSYVRVLKLASTPSWQEFSQISKIAGAGIFLVGLLGFIIFAVMSFLPGGV</sequence>
<organism>
    <name type="scientific">Haloferax mediterranei (strain ATCC 33500 / DSM 1411 / JCM 8866 / NBRC 14739 / NCIMB 2177 / R-4)</name>
    <name type="common">Halobacterium mediterranei</name>
    <dbReference type="NCBI Taxonomy" id="523841"/>
    <lineage>
        <taxon>Archaea</taxon>
        <taxon>Methanobacteriati</taxon>
        <taxon>Methanobacteriota</taxon>
        <taxon>Stenosarchaea group</taxon>
        <taxon>Halobacteria</taxon>
        <taxon>Halobacteriales</taxon>
        <taxon>Haloferacaceae</taxon>
        <taxon>Haloferax</taxon>
    </lineage>
</organism>
<reference key="1">
    <citation type="journal article" date="2000" name="Gene">
        <title>The ftsZ gene of Haloferax mediterranei: sequence, conserved gene order, and visualization of the FtsZ ring.</title>
        <authorList>
            <person name="Poplawski A."/>
            <person name="Gullbrand B."/>
            <person name="Bernander R."/>
        </authorList>
    </citation>
    <scope>NUCLEOTIDE SEQUENCE [GENOMIC DNA]</scope>
    <source>
        <strain>ATCC 33500 / DSM 1411 / JCM 8866 / NBRC 14739 / NCIMB 2177 / R-4</strain>
    </source>
</reference>
<reference key="2">
    <citation type="journal article" date="2012" name="J. Bacteriol.">
        <title>Complete genome sequence of the metabolically versatile halophilic archaeon Haloferax mediterranei, a poly(3-hydroxybutyrate-co-3-hydroxyvalerate) producer.</title>
        <authorList>
            <person name="Han J."/>
            <person name="Zhang F."/>
            <person name="Hou J."/>
            <person name="Liu X."/>
            <person name="Li M."/>
            <person name="Liu H."/>
            <person name="Cai L."/>
            <person name="Zhang B."/>
            <person name="Chen Y."/>
            <person name="Zhou J."/>
            <person name="Hu S."/>
            <person name="Xiang H."/>
        </authorList>
    </citation>
    <scope>NUCLEOTIDE SEQUENCE [LARGE SCALE GENOMIC DNA]</scope>
    <source>
        <strain>ATCC 33500 / DSM 1411 / JCM 8866 / NBRC 14739 / NCIMB 2177 / R-4</strain>
    </source>
</reference>
<evidence type="ECO:0000255" key="1">
    <source>
        <dbReference type="HAMAP-Rule" id="MF_00422"/>
    </source>
</evidence>
<keyword id="KW-1003">Cell membrane</keyword>
<keyword id="KW-0472">Membrane</keyword>
<keyword id="KW-0653">Protein transport</keyword>
<keyword id="KW-0811">Translocation</keyword>
<keyword id="KW-0812">Transmembrane</keyword>
<keyword id="KW-1133">Transmembrane helix</keyword>
<keyword id="KW-0813">Transport</keyword>
<comment type="function">
    <text evidence="1">Essential subunit of the Sec protein translocation channel SecYEG. Clamps together the 2 halves of SecY. May contact the channel plug during translocation.</text>
</comment>
<comment type="subunit">
    <text evidence="1">Component of the Sec protein translocase complex. Heterotrimer consisting of SecY (alpha), SecG (beta) and SecE (gamma) subunits. The heterotrimers can form oligomers, although 1 heterotrimer is thought to be able to translocate proteins. Interacts with the ribosome. May interact with SecDF, and other proteins may be involved.</text>
</comment>
<comment type="subcellular location">
    <subcellularLocation>
        <location evidence="1">Cell membrane</location>
        <topology evidence="1">Single-pass membrane protein</topology>
    </subcellularLocation>
</comment>
<comment type="similarity">
    <text evidence="1">Belongs to the SecE/SEC61-gamma family.</text>
</comment>